<organism>
    <name type="scientific">Mus musculus</name>
    <name type="common">Mouse</name>
    <dbReference type="NCBI Taxonomy" id="10090"/>
    <lineage>
        <taxon>Eukaryota</taxon>
        <taxon>Metazoa</taxon>
        <taxon>Chordata</taxon>
        <taxon>Craniata</taxon>
        <taxon>Vertebrata</taxon>
        <taxon>Euteleostomi</taxon>
        <taxon>Mammalia</taxon>
        <taxon>Eutheria</taxon>
        <taxon>Euarchontoglires</taxon>
        <taxon>Glires</taxon>
        <taxon>Rodentia</taxon>
        <taxon>Myomorpha</taxon>
        <taxon>Muroidea</taxon>
        <taxon>Muridae</taxon>
        <taxon>Murinae</taxon>
        <taxon>Mus</taxon>
        <taxon>Mus</taxon>
    </lineage>
</organism>
<gene>
    <name type="primary">Adcy9</name>
</gene>
<name>ADCY9_MOUSE</name>
<sequence>MASSPHQQLLHHHSTEVSCDSSGDSNSVRVKINPKQLSSNTHPKHCKYSISSSCSSSGDSGGLPRRVGGGGRLRRQKKLPQLFERASSRWWDPKFDSMNLEEACLERCFPQTQRRFRYALFYVGFACLLWSIYFAVHMKSKVIVMVVPALCFLVVCVGFFLFTFTKLYARHYAWTSLALTLLVFALTLAAQFQVWTPLSGRVDSSNHTLTATPADTCLSQVGSFSICIEVLLLLYTVMQLPLYLSLFLGVVYSVLFETFGYHFRNEDCYPSPGPGALHWELLSRALLHVCIHAIGIHLFVMSQVRSRSTFLKVGQSIMHGKDLEVEKALKERMIHSVMPRIIADDLMKQGDEESENSVKRHATSSPKNRKKKSSIQKAPIAFRPFKMQQIEEVSILFADIVGFTKMSANKSAHALVGLLNDLFGRFDRLCEQTKCEKISTLGDCYYCVAGCPEPRADHAYCCIEMGLGMIKAIEQFCQEKKEMVNMRVGVHTGTVLCGILGMRRFKFDVWSNDVNLANLMEQLGVAGKVHISEATAKYLDDRYEMEDGRVIERLGQSVVADQLKGLKTYLISGQRAKESHCSCAEALLSGFEVIDDSRESSGPRGQGTASPGSVSDLAQTVKTFDNLKTCPSCGITFAPKSEAGAEGGTVQNGCQDEPKTSTKASGGPNSKTQNGLLSPPAEEKLTNSQTSLCEILQEKGRWAGVSLDQSALLPLRFKNIREKTDAHFVDVIKEDSLMKDYFFKPPINQFSLNFLDQELERSYRTSYQEEVIKNSPVKTFASATFSSLLDVFLSTTVFLILSITCFLKYGATATPPPPAALAVFGADLLLEVLSLIVSIRMVFFLEDVMTCTKWLLEWIAGWLPRHCIGAILVSLPALAVYSHITSEFETNIHVTMFTGSAVLVAVVHYCNFCQLSSWMRSSLATIVGAGLLLLLHISLCQDSSIVMSPLDSAQNFSAQRNPCNSSVLQDGRRPASLIGKELILTFFLLLLLVWFLNREFEVSYRLHYHGDVEADLHRTKIQSMRDQADWLLRNIIPYHVAEQLKVSQTYSKNHDSGGVIFASIVNFSEFYEENYEGGKECYRVLNELIGDFDELLSKPDYNSIEKIKTIGATYMAASGLNTAQCQEGGHPQEHLRILFEFAKEMMRVVDDFNNNMLWFNFKLRVGFNHGPLTAGVIGTTKLLYDIWGDTVNIASRMDTTGVECRIQVSEESYRVLSKMGYDFDYRGTVNVKGKGQMKTYLYPKCTDNGVVPQHQLSISPDIRVQVDGSIGRSPTDEIANLVPSVQYSDKASLGSDDSTQAKEARLSSKRSWREPVKAEERFPFGKAIEKDSCEDIGVEEASELSKLNVSKSV</sequence>
<accession>P51830</accession>
<accession>Q61279</accession>
<protein>
    <recommendedName>
        <fullName>Adenylate cyclase type 9</fullName>
        <ecNumber evidence="7">4.6.1.1</ecNumber>
    </recommendedName>
    <alternativeName>
        <fullName>ATP pyrophosphate-lyase 9</fullName>
    </alternativeName>
    <alternativeName>
        <fullName>Adenylate cyclase type IX</fullName>
    </alternativeName>
    <alternativeName>
        <fullName>Adenylyl cyclase 9</fullName>
        <shortName evidence="8">AC9</shortName>
    </alternativeName>
    <alternativeName>
        <fullName>Adenylyl cyclase type 10</fullName>
        <shortName>ACTP10</shortName>
    </alternativeName>
</protein>
<reference key="1">
    <citation type="journal article" date="1996" name="J. Biol. Chem.">
        <title>Identification and characterization of a widely expressed form of adenylyl cyclase.</title>
        <authorList>
            <person name="Premont R.T."/>
            <person name="Matsuoka I."/>
            <person name="Mattei M.-G."/>
            <person name="Pouille Y."/>
            <person name="Defer N."/>
            <person name="Hanoune J."/>
        </authorList>
    </citation>
    <scope>NUCLEOTIDE SEQUENCE [MRNA]</scope>
    <scope>CATALYTIC ACTIVITY</scope>
    <scope>FUNCTION</scope>
    <scope>ACTIVITY REGULATION</scope>
    <scope>SUBCELLULAR LOCATION</scope>
    <scope>TISSUE SPECIFICITY</scope>
    <source>
        <strain>BALB/cJ</strain>
        <tissue>Brain</tissue>
    </source>
</reference>
<reference key="2">
    <citation type="journal article" date="1995" name="Biochem. Biophys. Res. Commun.">
        <title>Control of a novel adenylyl cyclase by calcineurin.</title>
        <authorList>
            <person name="Paterson J.M."/>
            <person name="Smith S.M."/>
            <person name="Harmar A.J."/>
            <person name="Antoni F.A."/>
        </authorList>
    </citation>
    <scope>NUCLEOTIDE SEQUENCE [MRNA]</scope>
</reference>
<reference key="3">
    <citation type="journal article" date="1994" name="Methods Enzymol.">
        <title>Identification of adenylyl cyclases by amplification using degenerate primers.</title>
        <authorList>
            <person name="Premont R.T."/>
        </authorList>
    </citation>
    <scope>NUCLEOTIDE SEQUENCE [MRNA] OF 1106-1193</scope>
</reference>
<reference key="4">
    <citation type="journal article" date="2007" name="Proc. Natl. Acad. Sci. U.S.A.">
        <title>Large-scale phosphorylation analysis of mouse liver.</title>
        <authorList>
            <person name="Villen J."/>
            <person name="Beausoleil S.A."/>
            <person name="Gerber S.A."/>
            <person name="Gygi S.P."/>
        </authorList>
    </citation>
    <scope>PHOSPHORYLATION [LARGE SCALE ANALYSIS] AT SER-613 AND SER-1332</scope>
    <scope>IDENTIFICATION BY MASS SPECTROMETRY [LARGE SCALE ANALYSIS]</scope>
    <source>
        <tissue>Liver</tissue>
    </source>
</reference>
<reference key="5">
    <citation type="journal article" date="2010" name="Cell">
        <title>A tissue-specific atlas of mouse protein phosphorylation and expression.</title>
        <authorList>
            <person name="Huttlin E.L."/>
            <person name="Jedrychowski M.P."/>
            <person name="Elias J.E."/>
            <person name="Goswami T."/>
            <person name="Rad R."/>
            <person name="Beausoleil S.A."/>
            <person name="Villen J."/>
            <person name="Haas W."/>
            <person name="Sowa M.E."/>
            <person name="Gygi S.P."/>
        </authorList>
    </citation>
    <scope>PHOSPHORYLATION [LARGE SCALE ANALYSIS] AT SER-610; SER-613; SER-688; SER-691; SER-706; SER-1295 AND SER-1332</scope>
    <scope>IDENTIFICATION BY MASS SPECTROMETRY [LARGE SCALE ANALYSIS]</scope>
    <source>
        <tissue>Brain</tissue>
        <tissue>Brown adipose tissue</tissue>
        <tissue>Heart</tissue>
        <tissue>Kidney</tissue>
        <tissue>Lung</tissue>
        <tissue>Pancreas</tissue>
        <tissue>Testis</tissue>
    </source>
</reference>
<dbReference type="EC" id="4.6.1.1" evidence="7"/>
<dbReference type="EMBL" id="U30602">
    <property type="protein sequence ID" value="AAC52603.1"/>
    <property type="molecule type" value="mRNA"/>
</dbReference>
<dbReference type="EMBL" id="Z50190">
    <property type="protein sequence ID" value="CAA90570.1"/>
    <property type="molecule type" value="mRNA"/>
</dbReference>
<dbReference type="CCDS" id="CCDS27917.1"/>
<dbReference type="PIR" id="JC4279">
    <property type="entry name" value="JC4279"/>
</dbReference>
<dbReference type="RefSeq" id="NP_001400202.1">
    <property type="nucleotide sequence ID" value="NM_001413273.1"/>
</dbReference>
<dbReference type="RefSeq" id="NP_033754.2">
    <property type="nucleotide sequence ID" value="NM_009624.4"/>
</dbReference>
<dbReference type="SMR" id="P51830"/>
<dbReference type="BioGRID" id="197978">
    <property type="interactions" value="4"/>
</dbReference>
<dbReference type="FunCoup" id="P51830">
    <property type="interactions" value="1441"/>
</dbReference>
<dbReference type="STRING" id="10090.ENSMUSP00000113498"/>
<dbReference type="GlyCosmos" id="P51830">
    <property type="glycosylation" value="3 sites, No reported glycans"/>
</dbReference>
<dbReference type="GlyGen" id="P51830">
    <property type="glycosylation" value="4 sites, 1 N-linked glycan (1 site)"/>
</dbReference>
<dbReference type="iPTMnet" id="P51830"/>
<dbReference type="PhosphoSitePlus" id="P51830"/>
<dbReference type="SwissPalm" id="P51830"/>
<dbReference type="jPOST" id="P51830"/>
<dbReference type="PaxDb" id="10090-ENSMUSP00000113498"/>
<dbReference type="PeptideAtlas" id="P51830"/>
<dbReference type="ProteomicsDB" id="285685"/>
<dbReference type="Antibodypedia" id="55436">
    <property type="antibodies" value="243 antibodies from 31 providers"/>
</dbReference>
<dbReference type="DNASU" id="11515"/>
<dbReference type="Ensembl" id="ENSMUST00000005719.4">
    <property type="protein sequence ID" value="ENSMUSP00000005719.4"/>
    <property type="gene ID" value="ENSMUSG00000005580.12"/>
</dbReference>
<dbReference type="Ensembl" id="ENSMUST00000117801.8">
    <property type="protein sequence ID" value="ENSMUSP00000113498.2"/>
    <property type="gene ID" value="ENSMUSG00000005580.12"/>
</dbReference>
<dbReference type="GeneID" id="11515"/>
<dbReference type="KEGG" id="mmu:11515"/>
<dbReference type="UCSC" id="uc007xzr.2">
    <property type="organism name" value="mouse"/>
</dbReference>
<dbReference type="AGR" id="MGI:108450"/>
<dbReference type="CTD" id="115"/>
<dbReference type="MGI" id="MGI:108450">
    <property type="gene designation" value="Adcy9"/>
</dbReference>
<dbReference type="VEuPathDB" id="HostDB:ENSMUSG00000005580"/>
<dbReference type="eggNOG" id="KOG3618">
    <property type="taxonomic scope" value="Eukaryota"/>
</dbReference>
<dbReference type="GeneTree" id="ENSGT00940000155577"/>
<dbReference type="InParanoid" id="P51830"/>
<dbReference type="OMA" id="FTAMPPG"/>
<dbReference type="OrthoDB" id="60033at2759"/>
<dbReference type="PhylomeDB" id="P51830"/>
<dbReference type="TreeFam" id="TF313845"/>
<dbReference type="BRENDA" id="4.6.1.1">
    <property type="organism ID" value="3474"/>
</dbReference>
<dbReference type="Reactome" id="R-MMU-163615">
    <property type="pathway name" value="PKA activation"/>
</dbReference>
<dbReference type="Reactome" id="R-MMU-170660">
    <property type="pathway name" value="Adenylate cyclase activating pathway"/>
</dbReference>
<dbReference type="Reactome" id="R-MMU-170670">
    <property type="pathway name" value="Adenylate cyclase inhibitory pathway"/>
</dbReference>
<dbReference type="Reactome" id="R-MMU-418597">
    <property type="pathway name" value="G alpha (z) signalling events"/>
</dbReference>
<dbReference type="Reactome" id="R-MMU-5610787">
    <property type="pathway name" value="Hedgehog 'off' state"/>
</dbReference>
<dbReference type="BioGRID-ORCS" id="11515">
    <property type="hits" value="0 hits in 75 CRISPR screens"/>
</dbReference>
<dbReference type="ChiTaRS" id="Adcy9">
    <property type="organism name" value="mouse"/>
</dbReference>
<dbReference type="PRO" id="PR:P51830"/>
<dbReference type="Proteomes" id="UP000000589">
    <property type="component" value="Chromosome 16"/>
</dbReference>
<dbReference type="RNAct" id="P51830">
    <property type="molecule type" value="protein"/>
</dbReference>
<dbReference type="Bgee" id="ENSMUSG00000005580">
    <property type="expression patterns" value="Expressed in CA3 field of hippocampus and 241 other cell types or tissues"/>
</dbReference>
<dbReference type="ExpressionAtlas" id="P51830">
    <property type="expression patterns" value="baseline and differential"/>
</dbReference>
<dbReference type="GO" id="GO:0030424">
    <property type="term" value="C:axon"/>
    <property type="evidence" value="ECO:0007669"/>
    <property type="project" value="Ensembl"/>
</dbReference>
<dbReference type="GO" id="GO:0036064">
    <property type="term" value="C:ciliary basal body"/>
    <property type="evidence" value="ECO:0007669"/>
    <property type="project" value="Ensembl"/>
</dbReference>
<dbReference type="GO" id="GO:0005829">
    <property type="term" value="C:cytosol"/>
    <property type="evidence" value="ECO:0007669"/>
    <property type="project" value="Ensembl"/>
</dbReference>
<dbReference type="GO" id="GO:0030425">
    <property type="term" value="C:dendrite"/>
    <property type="evidence" value="ECO:0007669"/>
    <property type="project" value="Ensembl"/>
</dbReference>
<dbReference type="GO" id="GO:0016020">
    <property type="term" value="C:membrane"/>
    <property type="evidence" value="ECO:0000314"/>
    <property type="project" value="MGI"/>
</dbReference>
<dbReference type="GO" id="GO:0005886">
    <property type="term" value="C:plasma membrane"/>
    <property type="evidence" value="ECO:0000250"/>
    <property type="project" value="UniProtKB"/>
</dbReference>
<dbReference type="GO" id="GO:0004016">
    <property type="term" value="F:adenylate cyclase activity"/>
    <property type="evidence" value="ECO:0000314"/>
    <property type="project" value="MGI"/>
</dbReference>
<dbReference type="GO" id="GO:0005524">
    <property type="term" value="F:ATP binding"/>
    <property type="evidence" value="ECO:0007669"/>
    <property type="project" value="UniProtKB-KW"/>
</dbReference>
<dbReference type="GO" id="GO:0046872">
    <property type="term" value="F:metal ion binding"/>
    <property type="evidence" value="ECO:0007669"/>
    <property type="project" value="UniProtKB-KW"/>
</dbReference>
<dbReference type="GO" id="GO:0071880">
    <property type="term" value="P:adenylate cyclase-activating adrenergic receptor signaling pathway"/>
    <property type="evidence" value="ECO:0000250"/>
    <property type="project" value="UniProtKB"/>
</dbReference>
<dbReference type="GO" id="GO:0007189">
    <property type="term" value="P:adenylate cyclase-activating G protein-coupled receptor signaling pathway"/>
    <property type="evidence" value="ECO:0000314"/>
    <property type="project" value="MGI"/>
</dbReference>
<dbReference type="GO" id="GO:0006171">
    <property type="term" value="P:cAMP biosynthetic process"/>
    <property type="evidence" value="ECO:0000314"/>
    <property type="project" value="MGI"/>
</dbReference>
<dbReference type="GO" id="GO:0001701">
    <property type="term" value="P:in utero embryonic development"/>
    <property type="evidence" value="ECO:0000315"/>
    <property type="project" value="MGI"/>
</dbReference>
<dbReference type="GO" id="GO:0035556">
    <property type="term" value="P:intracellular signal transduction"/>
    <property type="evidence" value="ECO:0007669"/>
    <property type="project" value="InterPro"/>
</dbReference>
<dbReference type="CDD" id="cd07302">
    <property type="entry name" value="CHD"/>
    <property type="match status" value="2"/>
</dbReference>
<dbReference type="FunFam" id="3.30.70.1230:FF:000008">
    <property type="entry name" value="Adenylate cyclase type 9"/>
    <property type="match status" value="1"/>
</dbReference>
<dbReference type="FunFam" id="3.30.70.1230:FF:000014">
    <property type="entry name" value="adenylate cyclase type 9"/>
    <property type="match status" value="1"/>
</dbReference>
<dbReference type="Gene3D" id="3.30.70.1230">
    <property type="entry name" value="Nucleotide cyclase"/>
    <property type="match status" value="2"/>
</dbReference>
<dbReference type="InterPro" id="IPR001054">
    <property type="entry name" value="A/G_cyclase"/>
</dbReference>
<dbReference type="InterPro" id="IPR018297">
    <property type="entry name" value="A/G_cyclase_CS"/>
</dbReference>
<dbReference type="InterPro" id="IPR029787">
    <property type="entry name" value="Nucleotide_cyclase"/>
</dbReference>
<dbReference type="PANTHER" id="PTHR45627">
    <property type="entry name" value="ADENYLATE CYCLASE TYPE 1"/>
    <property type="match status" value="1"/>
</dbReference>
<dbReference type="PANTHER" id="PTHR45627:SF8">
    <property type="entry name" value="ADENYLATE CYCLASE TYPE 9"/>
    <property type="match status" value="1"/>
</dbReference>
<dbReference type="Pfam" id="PF00211">
    <property type="entry name" value="Guanylate_cyc"/>
    <property type="match status" value="2"/>
</dbReference>
<dbReference type="SMART" id="SM00044">
    <property type="entry name" value="CYCc"/>
    <property type="match status" value="2"/>
</dbReference>
<dbReference type="SUPFAM" id="SSF55073">
    <property type="entry name" value="Nucleotide cyclase"/>
    <property type="match status" value="2"/>
</dbReference>
<dbReference type="PROSITE" id="PS00452">
    <property type="entry name" value="GUANYLATE_CYCLASE_1"/>
    <property type="match status" value="2"/>
</dbReference>
<dbReference type="PROSITE" id="PS50125">
    <property type="entry name" value="GUANYLATE_CYCLASE_2"/>
    <property type="match status" value="2"/>
</dbReference>
<feature type="chain" id="PRO_0000195709" description="Adenylate cyclase type 9">
    <location>
        <begin position="1"/>
        <end position="1353"/>
    </location>
</feature>
<feature type="topological domain" description="Cytoplasmic" evidence="4">
    <location>
        <begin position="1"/>
        <end position="117"/>
    </location>
</feature>
<feature type="transmembrane region" description="Helical" evidence="4">
    <location>
        <begin position="118"/>
        <end position="138"/>
    </location>
</feature>
<feature type="topological domain" description="Extracellular" evidence="4">
    <location>
        <begin position="139"/>
        <end position="141"/>
    </location>
</feature>
<feature type="transmembrane region" description="Helical" evidence="4">
    <location>
        <begin position="142"/>
        <end position="162"/>
    </location>
</feature>
<feature type="topological domain" description="Cytoplasmic" evidence="4">
    <location>
        <begin position="163"/>
        <end position="171"/>
    </location>
</feature>
<feature type="transmembrane region" description="Helical" evidence="4">
    <location>
        <begin position="172"/>
        <end position="192"/>
    </location>
</feature>
<feature type="topological domain" description="Extracellular" evidence="4">
    <location>
        <begin position="193"/>
        <end position="215"/>
    </location>
</feature>
<feature type="transmembrane region" description="Helical" evidence="4">
    <location>
        <begin position="216"/>
        <end position="235"/>
    </location>
</feature>
<feature type="topological domain" description="Cytoplasmic" evidence="4">
    <location>
        <begin position="236"/>
        <end position="241"/>
    </location>
</feature>
<feature type="transmembrane region" description="Helical" evidence="4">
    <location>
        <begin position="242"/>
        <end position="259"/>
    </location>
</feature>
<feature type="topological domain" description="Extracellular" evidence="4">
    <location>
        <begin position="260"/>
        <end position="280"/>
    </location>
</feature>
<feature type="transmembrane region" description="Helical" evidence="4">
    <location>
        <begin position="281"/>
        <end position="301"/>
    </location>
</feature>
<feature type="topological domain" description="Cytoplasmic" evidence="4">
    <location>
        <begin position="302"/>
        <end position="786"/>
    </location>
</feature>
<feature type="transmembrane region" description="Helical" evidence="4">
    <location>
        <begin position="787"/>
        <end position="807"/>
    </location>
</feature>
<feature type="topological domain" description="Extracellular" evidence="4">
    <location>
        <begin position="808"/>
        <end position="818"/>
    </location>
</feature>
<feature type="transmembrane region" description="Helical" evidence="4">
    <location>
        <begin position="819"/>
        <end position="839"/>
    </location>
</feature>
<feature type="topological domain" description="Cytoplasmic" evidence="4">
    <location>
        <begin position="840"/>
        <end position="867"/>
    </location>
</feature>
<feature type="transmembrane region" description="Helical" evidence="4">
    <location>
        <begin position="868"/>
        <end position="888"/>
    </location>
</feature>
<feature type="topological domain" description="Extracellular" evidence="4">
    <location>
        <begin position="889"/>
        <end position="891"/>
    </location>
</feature>
<feature type="transmembrane region" description="Helical" evidence="4">
    <location>
        <begin position="892"/>
        <end position="912"/>
    </location>
</feature>
<feature type="topological domain" description="Cytoplasmic" evidence="4">
    <location>
        <begin position="913"/>
        <end position="920"/>
    </location>
</feature>
<feature type="transmembrane region" description="Helical" evidence="4">
    <location>
        <begin position="921"/>
        <end position="941"/>
    </location>
</feature>
<feature type="topological domain" description="Extracellular" evidence="4">
    <location>
        <begin position="942"/>
        <end position="975"/>
    </location>
</feature>
<feature type="transmembrane region" description="Helical" evidence="4">
    <location>
        <begin position="976"/>
        <end position="996"/>
    </location>
</feature>
<feature type="topological domain" description="Cytoplasmic" evidence="4">
    <location>
        <begin position="997"/>
        <end position="1353"/>
    </location>
</feature>
<feature type="region of interest" description="Disordered" evidence="6">
    <location>
        <begin position="1"/>
        <end position="27"/>
    </location>
</feature>
<feature type="region of interest" description="Disordered" evidence="6">
    <location>
        <begin position="51"/>
        <end position="73"/>
    </location>
</feature>
<feature type="region of interest" description="Disordered" evidence="6">
    <location>
        <begin position="349"/>
        <end position="375"/>
    </location>
</feature>
<feature type="region of interest" description="Disordered" evidence="6">
    <location>
        <begin position="596"/>
        <end position="615"/>
    </location>
</feature>
<feature type="region of interest" description="Disordered" evidence="6">
    <location>
        <begin position="641"/>
        <end position="685"/>
    </location>
</feature>
<feature type="region of interest" description="Disordered" evidence="6">
    <location>
        <begin position="1290"/>
        <end position="1314"/>
    </location>
</feature>
<feature type="compositionally biased region" description="Polar residues" evidence="6">
    <location>
        <begin position="16"/>
        <end position="27"/>
    </location>
</feature>
<feature type="compositionally biased region" description="Low complexity" evidence="6">
    <location>
        <begin position="51"/>
        <end position="66"/>
    </location>
</feature>
<feature type="compositionally biased region" description="Basic residues" evidence="6">
    <location>
        <begin position="359"/>
        <end position="374"/>
    </location>
</feature>
<feature type="compositionally biased region" description="Polar residues" evidence="6">
    <location>
        <begin position="661"/>
        <end position="676"/>
    </location>
</feature>
<feature type="compositionally biased region" description="Basic and acidic residues" evidence="6">
    <location>
        <begin position="1299"/>
        <end position="1314"/>
    </location>
</feature>
<feature type="binding site" evidence="3">
    <location>
        <begin position="399"/>
        <end position="404"/>
    </location>
    <ligand>
        <name>ATP</name>
        <dbReference type="ChEBI" id="CHEBI:30616"/>
    </ligand>
</feature>
<feature type="binding site" evidence="5">
    <location>
        <position position="399"/>
    </location>
    <ligand>
        <name>Mg(2+)</name>
        <dbReference type="ChEBI" id="CHEBI:18420"/>
        <label>1</label>
        <note>catalytic</note>
    </ligand>
</feature>
<feature type="binding site" evidence="5">
    <location>
        <position position="399"/>
    </location>
    <ligand>
        <name>Mg(2+)</name>
        <dbReference type="ChEBI" id="CHEBI:18420"/>
        <label>2</label>
        <note>catalytic</note>
    </ligand>
</feature>
<feature type="binding site" evidence="5">
    <location>
        <position position="400"/>
    </location>
    <ligand>
        <name>Mg(2+)</name>
        <dbReference type="ChEBI" id="CHEBI:18420"/>
        <label>2</label>
        <note>catalytic</note>
    </ligand>
</feature>
<feature type="binding site" evidence="3">
    <location>
        <begin position="441"/>
        <end position="443"/>
    </location>
    <ligand>
        <name>ATP</name>
        <dbReference type="ChEBI" id="CHEBI:30616"/>
    </ligand>
</feature>
<feature type="binding site" evidence="5">
    <location>
        <position position="443"/>
    </location>
    <ligand>
        <name>Mg(2+)</name>
        <dbReference type="ChEBI" id="CHEBI:18420"/>
        <label>1</label>
        <note>catalytic</note>
    </ligand>
</feature>
<feature type="binding site" evidence="5">
    <location>
        <position position="443"/>
    </location>
    <ligand>
        <name>Mg(2+)</name>
        <dbReference type="ChEBI" id="CHEBI:18420"/>
        <label>2</label>
        <note>catalytic</note>
    </ligand>
</feature>
<feature type="binding site" evidence="3">
    <location>
        <position position="487"/>
    </location>
    <ligand>
        <name>ATP</name>
        <dbReference type="ChEBI" id="CHEBI:30616"/>
    </ligand>
</feature>
<feature type="binding site" evidence="2">
    <location>
        <position position="1108"/>
    </location>
    <ligand>
        <name>ATP</name>
        <dbReference type="ChEBI" id="CHEBI:30616"/>
    </ligand>
</feature>
<feature type="binding site" evidence="2">
    <location>
        <begin position="1185"/>
        <end position="1187"/>
    </location>
    <ligand>
        <name>ATP</name>
        <dbReference type="ChEBI" id="CHEBI:30616"/>
    </ligand>
</feature>
<feature type="binding site" evidence="2">
    <location>
        <begin position="1192"/>
        <end position="1196"/>
    </location>
    <ligand>
        <name>ATP</name>
        <dbReference type="ChEBI" id="CHEBI:30616"/>
    </ligand>
</feature>
<feature type="binding site" evidence="2">
    <location>
        <position position="1232"/>
    </location>
    <ligand>
        <name>ATP</name>
        <dbReference type="ChEBI" id="CHEBI:30616"/>
    </ligand>
</feature>
<feature type="modified residue" description="Phosphoserine" evidence="11">
    <location>
        <position position="610"/>
    </location>
</feature>
<feature type="modified residue" description="Phosphoserine" evidence="10 11">
    <location>
        <position position="613"/>
    </location>
</feature>
<feature type="modified residue" description="Phosphoserine" evidence="11">
    <location>
        <position position="688"/>
    </location>
</feature>
<feature type="modified residue" description="Phosphoserine" evidence="11">
    <location>
        <position position="691"/>
    </location>
</feature>
<feature type="modified residue" description="Phosphoserine" evidence="11">
    <location>
        <position position="706"/>
    </location>
</feature>
<feature type="modified residue" description="Phosphoserine" evidence="1">
    <location>
        <position position="1257"/>
    </location>
</feature>
<feature type="modified residue" description="Phosphoserine" evidence="1">
    <location>
        <position position="1259"/>
    </location>
</feature>
<feature type="modified residue" description="Phosphoserine" evidence="11">
    <location>
        <position position="1295"/>
    </location>
</feature>
<feature type="modified residue" description="Phosphoserine" evidence="1">
    <location>
        <position position="1307"/>
    </location>
</feature>
<feature type="modified residue" description="Phosphoserine" evidence="10 11">
    <location>
        <position position="1332"/>
    </location>
</feature>
<feature type="glycosylation site" description="N-linked (GlcNAc...) asparagine" evidence="4">
    <location>
        <position position="206"/>
    </location>
</feature>
<feature type="glycosylation site" description="N-linked (GlcNAc...) asparagine" evidence="4">
    <location>
        <position position="955"/>
    </location>
</feature>
<feature type="glycosylation site" description="N-linked (GlcNAc...) asparagine" evidence="4">
    <location>
        <position position="964"/>
    </location>
</feature>
<feature type="sequence conflict" description="In Ref. 2; CAA90570." evidence="9" ref="2">
    <original>H</original>
    <variation>Q</variation>
    <location>
        <position position="893"/>
    </location>
</feature>
<feature type="sequence conflict" description="In Ref. 3; no nucleotide entry." evidence="9" ref="3">
    <original>N</original>
    <variation>D</variation>
    <location>
        <position position="1192"/>
    </location>
</feature>
<feature type="sequence conflict" description="In Ref. 2; CAA90570." evidence="9" ref="2">
    <original>R</original>
    <variation>H</variation>
    <location>
        <position position="1305"/>
    </location>
</feature>
<keyword id="KW-0067">ATP-binding</keyword>
<keyword id="KW-0115">cAMP biosynthesis</keyword>
<keyword id="KW-1003">Cell membrane</keyword>
<keyword id="KW-0325">Glycoprotein</keyword>
<keyword id="KW-0456">Lyase</keyword>
<keyword id="KW-0460">Magnesium</keyword>
<keyword id="KW-0464">Manganese</keyword>
<keyword id="KW-0472">Membrane</keyword>
<keyword id="KW-0479">Metal-binding</keyword>
<keyword id="KW-0547">Nucleotide-binding</keyword>
<keyword id="KW-0597">Phosphoprotein</keyword>
<keyword id="KW-1185">Reference proteome</keyword>
<keyword id="KW-0677">Repeat</keyword>
<keyword id="KW-0812">Transmembrane</keyword>
<keyword id="KW-1133">Transmembrane helix</keyword>
<proteinExistence type="evidence at protein level"/>
<comment type="function">
    <text evidence="1 7">Adenylyl cyclase that catalyzes the formation of the signaling molecule cAMP in response to activation of G protein-coupled receptors. Contributes to signaling cascades activated by CRH (corticotropin-releasing factor), corticosteroids and by beta-adrenergic receptors.</text>
</comment>
<comment type="catalytic activity">
    <reaction evidence="1">
        <text>ATP = 3',5'-cyclic AMP + diphosphate</text>
        <dbReference type="Rhea" id="RHEA:15389"/>
        <dbReference type="ChEBI" id="CHEBI:30616"/>
        <dbReference type="ChEBI" id="CHEBI:33019"/>
        <dbReference type="ChEBI" id="CHEBI:58165"/>
        <dbReference type="EC" id="4.6.1.1"/>
    </reaction>
</comment>
<comment type="cofactor">
    <cofactor evidence="3">
        <name>Mg(2+)</name>
        <dbReference type="ChEBI" id="CHEBI:18420"/>
    </cofactor>
    <cofactor evidence="3">
        <name>Mn(2+)</name>
        <dbReference type="ChEBI" id="CHEBI:29035"/>
    </cofactor>
    <text evidence="3">Binds 2 magnesium ions per subunit. Is also active with manganese (in vitro).</text>
</comment>
<comment type="activity regulation">
    <text evidence="1">Insensitive to calcium/calmodulin, forskolin and somatostatin. Stimulated by beta-adrenergic receptor activation. Activity is down-regulated by calcium/calcineurin.</text>
</comment>
<comment type="subcellular location">
    <subcellularLocation>
        <location evidence="7">Cell membrane</location>
        <topology evidence="9">Multi-pass membrane protein</topology>
    </subcellularLocation>
</comment>
<comment type="tissue specificity">
    <text evidence="7">Detected in brain, spleen, lung, liver and testis (at protein level). Detected in brain, especially in hippocampus, cerebellum and neocortex. Found in decreasing order in skeletal muscle, heart, adrenal gland, ovary and brain; and to a lesser extent, in kidney, liver, testis, lung, thymus and spleen.</text>
</comment>
<comment type="domain">
    <text evidence="2">The protein contains two modules with six transmembrane helices each; both are required for catalytic activity. Isolated N-terminal or C-terminal guanylate cyclase domains have no catalytic activity, but when they are brought together, enzyme activity is restored. The active site is at the interface of the two domains. Both contribute substrate-binding residues, but the catalytic metal ions are bound exclusively via the N-terminal guanylate cyclase domain.</text>
</comment>
<comment type="similarity">
    <text evidence="5">Belongs to the adenylyl cyclase class-4/guanylyl cyclase family.</text>
</comment>
<evidence type="ECO:0000250" key="1">
    <source>
        <dbReference type="UniProtKB" id="O60503"/>
    </source>
</evidence>
<evidence type="ECO:0000250" key="2">
    <source>
        <dbReference type="UniProtKB" id="P26769"/>
    </source>
</evidence>
<evidence type="ECO:0000250" key="3">
    <source>
        <dbReference type="UniProtKB" id="P30803"/>
    </source>
</evidence>
<evidence type="ECO:0000255" key="4"/>
<evidence type="ECO:0000255" key="5">
    <source>
        <dbReference type="PROSITE-ProRule" id="PRU00099"/>
    </source>
</evidence>
<evidence type="ECO:0000256" key="6">
    <source>
        <dbReference type="SAM" id="MobiDB-lite"/>
    </source>
</evidence>
<evidence type="ECO:0000269" key="7">
    <source>
    </source>
</evidence>
<evidence type="ECO:0000303" key="8">
    <source>
    </source>
</evidence>
<evidence type="ECO:0000305" key="9"/>
<evidence type="ECO:0007744" key="10">
    <source>
    </source>
</evidence>
<evidence type="ECO:0007744" key="11">
    <source>
    </source>
</evidence>